<proteinExistence type="uncertain"/>
<reference key="1">
    <citation type="journal article" date="2000" name="DNA Res.">
        <title>Structural analysis of Arabidopsis thaliana chromosome 3. II. Sequence features of the 4,251,695 bp regions covered by 90 P1, TAC and BAC clones.</title>
        <authorList>
            <person name="Kaneko T."/>
            <person name="Katoh T."/>
            <person name="Sato S."/>
            <person name="Nakamura Y."/>
            <person name="Asamizu E."/>
            <person name="Tabata S."/>
        </authorList>
    </citation>
    <scope>NUCLEOTIDE SEQUENCE [LARGE SCALE GENOMIC DNA]</scope>
    <source>
        <strain>cv. Columbia</strain>
    </source>
</reference>
<reference key="2">
    <citation type="journal article" date="2017" name="Plant J.">
        <title>Araport11: a complete reannotation of the Arabidopsis thaliana reference genome.</title>
        <authorList>
            <person name="Cheng C.Y."/>
            <person name="Krishnakumar V."/>
            <person name="Chan A.P."/>
            <person name="Thibaud-Nissen F."/>
            <person name="Schobel S."/>
            <person name="Town C.D."/>
        </authorList>
    </citation>
    <scope>GENOME REANNOTATION</scope>
    <source>
        <strain>cv. Columbia</strain>
    </source>
</reference>
<reference key="3">
    <citation type="journal article" date="2008" name="BMC Genomics">
        <title>Genome-wide and expression analysis of protein phosphatase 2C in rice and Arabidopsis.</title>
        <authorList>
            <person name="Xue T."/>
            <person name="Wang D."/>
            <person name="Zhang S."/>
            <person name="Ehlting J."/>
            <person name="Ni F."/>
            <person name="Jacab S."/>
            <person name="Zheng C."/>
            <person name="Zhong Y."/>
        </authorList>
    </citation>
    <scope>GENE FAMILY</scope>
    <scope>NOMENCLATURE</scope>
</reference>
<dbReference type="EMBL" id="AP001312">
    <property type="protein sequence ID" value="BAB01931.1"/>
    <property type="status" value="ALT_SEQ"/>
    <property type="molecule type" value="Genomic_DNA"/>
</dbReference>
<dbReference type="EMBL" id="CP002686">
    <property type="protein sequence ID" value="AEE77272.1"/>
    <property type="molecule type" value="Genomic_DNA"/>
</dbReference>
<dbReference type="RefSeq" id="NP_189350.2">
    <property type="nucleotide sequence ID" value="NM_113628.2"/>
</dbReference>
<dbReference type="SMR" id="Q3EAZ3"/>
<dbReference type="STRING" id="3702.Q3EAZ3"/>
<dbReference type="PaxDb" id="3702-AT3G27140.1"/>
<dbReference type="ProteomicsDB" id="248715"/>
<dbReference type="EnsemblPlants" id="AT3G27140.1">
    <property type="protein sequence ID" value="AT3G27140.1"/>
    <property type="gene ID" value="AT3G27140"/>
</dbReference>
<dbReference type="GeneID" id="822333"/>
<dbReference type="Gramene" id="AT3G27140.1">
    <property type="protein sequence ID" value="AT3G27140.1"/>
    <property type="gene ID" value="AT3G27140"/>
</dbReference>
<dbReference type="KEGG" id="ath:AT3G27140"/>
<dbReference type="Araport" id="AT3G27140"/>
<dbReference type="TAIR" id="AT3G27140"/>
<dbReference type="eggNOG" id="KOG0698">
    <property type="taxonomic scope" value="Eukaryota"/>
</dbReference>
<dbReference type="HOGENOM" id="CLU_013173_10_0_1"/>
<dbReference type="InParanoid" id="Q3EAZ3"/>
<dbReference type="OMA" id="CEDEHRR"/>
<dbReference type="PhylomeDB" id="Q3EAZ3"/>
<dbReference type="Proteomes" id="UP000006548">
    <property type="component" value="Chromosome 3"/>
</dbReference>
<dbReference type="GO" id="GO:0004722">
    <property type="term" value="F:protein serine/threonine phosphatase activity"/>
    <property type="evidence" value="ECO:0007669"/>
    <property type="project" value="InterPro"/>
</dbReference>
<dbReference type="CDD" id="cd00143">
    <property type="entry name" value="PP2Cc"/>
    <property type="match status" value="1"/>
</dbReference>
<dbReference type="FunFam" id="3.60.40.10:FF:000281">
    <property type="entry name" value="Protein phosphatase 2C family protein"/>
    <property type="match status" value="1"/>
</dbReference>
<dbReference type="Gene3D" id="3.60.40.10">
    <property type="entry name" value="PPM-type phosphatase domain"/>
    <property type="match status" value="2"/>
</dbReference>
<dbReference type="InterPro" id="IPR015655">
    <property type="entry name" value="PP2C"/>
</dbReference>
<dbReference type="InterPro" id="IPR036457">
    <property type="entry name" value="PPM-type-like_dom_sf"/>
</dbReference>
<dbReference type="InterPro" id="IPR001932">
    <property type="entry name" value="PPM-type_phosphatase-like_dom"/>
</dbReference>
<dbReference type="PANTHER" id="PTHR13832">
    <property type="entry name" value="PROTEIN PHOSPHATASE 2C"/>
    <property type="match status" value="1"/>
</dbReference>
<dbReference type="PANTHER" id="PTHR13832:SF859">
    <property type="entry name" value="PROTEIN PHOSPHATASE 2C FAMILY PROTEIN-RELATED"/>
    <property type="match status" value="1"/>
</dbReference>
<dbReference type="Pfam" id="PF00481">
    <property type="entry name" value="PP2C"/>
    <property type="match status" value="1"/>
</dbReference>
<dbReference type="SMART" id="SM00332">
    <property type="entry name" value="PP2Cc"/>
    <property type="match status" value="1"/>
</dbReference>
<dbReference type="SUPFAM" id="SSF81606">
    <property type="entry name" value="PP2C-like"/>
    <property type="match status" value="1"/>
</dbReference>
<dbReference type="PROSITE" id="PS51746">
    <property type="entry name" value="PPM_2"/>
    <property type="match status" value="1"/>
</dbReference>
<protein>
    <recommendedName>
        <fullName>Putative protein phosphatase 2C-like protein 45</fullName>
        <shortName>AtPP2C45</shortName>
    </recommendedName>
    <alternativeName>
        <fullName>Protein phosphatase AP2C6</fullName>
    </alternativeName>
</protein>
<comment type="similarity">
    <text evidence="2">Belongs to the PP2C family.</text>
</comment>
<comment type="caution">
    <text evidence="2">Although related to the protein phosphatase 2C family, lacks some of the conserved residues that bind manganese, suggesting it has no phosphatase activity.</text>
</comment>
<comment type="caution">
    <text evidence="2">Could be the product of a pseudogene.</text>
</comment>
<comment type="sequence caution" evidence="2">
    <conflict type="erroneous gene model prediction">
        <sequence resource="EMBL-CDS" id="BAB01931"/>
    </conflict>
</comment>
<keyword id="KW-1185">Reference proteome</keyword>
<gene>
    <name type="ordered locus">At3g27140</name>
    <name type="ORF">MYF5.1</name>
</gene>
<organism>
    <name type="scientific">Arabidopsis thaliana</name>
    <name type="common">Mouse-ear cress</name>
    <dbReference type="NCBI Taxonomy" id="3702"/>
    <lineage>
        <taxon>Eukaryota</taxon>
        <taxon>Viridiplantae</taxon>
        <taxon>Streptophyta</taxon>
        <taxon>Embryophyta</taxon>
        <taxon>Tracheophyta</taxon>
        <taxon>Spermatophyta</taxon>
        <taxon>Magnoliopsida</taxon>
        <taxon>eudicotyledons</taxon>
        <taxon>Gunneridae</taxon>
        <taxon>Pentapetalae</taxon>
        <taxon>rosids</taxon>
        <taxon>malvids</taxon>
        <taxon>Brassicales</taxon>
        <taxon>Brassicaceae</taxon>
        <taxon>Camelineae</taxon>
        <taxon>Arabidopsis</taxon>
    </lineage>
</organism>
<accession>Q3EAZ3</accession>
<accession>Q9LI90</accession>
<evidence type="ECO:0000255" key="1">
    <source>
        <dbReference type="PROSITE-ProRule" id="PRU01082"/>
    </source>
</evidence>
<evidence type="ECO:0000305" key="2"/>
<sequence>MEDRFSTITNLHGDRKQAIFGVYVGHGGVKAAECPAKNLDKNIVEEVVGKRHELEIAEAGGSSCVTALVSEGSLVVSNAGDCRAVMSVGGVAKGSLVVPRGIGDAQLKKWVIAEPETKISRVEHDHEFLILASHGLWDKVSNQEAVDIARPFCLRTEKPLLLAACKKLVDLSASRGSFDDISVMLIPLRPVRIEKRGILEDVSSSKANSIARDIAISVTRDGRFRSYLARGGPGWLLSRIEEDKR</sequence>
<name>P2C45_ARATH</name>
<feature type="chain" id="PRO_0000367969" description="Putative protein phosphatase 2C-like protein 45">
    <location>
        <begin position="1"/>
        <end position="245"/>
    </location>
</feature>
<feature type="domain" description="PPM-type phosphatase" evidence="1">
    <location>
        <begin position="1"/>
        <end position="188"/>
    </location>
</feature>